<proteinExistence type="evidence at transcript level"/>
<protein>
    <recommendedName>
        <fullName>Myosin-9</fullName>
    </recommendedName>
    <alternativeName>
        <fullName>Cellular myosin heavy chain, type A</fullName>
    </alternativeName>
    <alternativeName>
        <fullName>Myosin heavy chain 9</fullName>
    </alternativeName>
    <alternativeName>
        <fullName>Myosin heavy chain, non-muscle IIa</fullName>
    </alternativeName>
    <alternativeName>
        <fullName>Non-muscle myosin heavy chain A</fullName>
        <shortName>NMMHC-A</shortName>
    </alternativeName>
    <alternativeName>
        <fullName>Non-muscle myosin heavy chain IIa</fullName>
        <shortName>NMMHC II-a</shortName>
        <shortName>NMMHC-IIA</shortName>
    </alternativeName>
</protein>
<name>MYH9_CHICK</name>
<keyword id="KW-0009">Actin-binding</keyword>
<keyword id="KW-0067">ATP-binding</keyword>
<keyword id="KW-0112">Calmodulin-binding</keyword>
<keyword id="KW-0133">Cell shape</keyword>
<keyword id="KW-0175">Coiled coil</keyword>
<keyword id="KW-0963">Cytoplasm</keyword>
<keyword id="KW-0968">Cytoplasmic vesicle</keyword>
<keyword id="KW-0206">Cytoskeleton</keyword>
<keyword id="KW-0505">Motor protein</keyword>
<keyword id="KW-0518">Myosin</keyword>
<keyword id="KW-0547">Nucleotide-binding</keyword>
<keyword id="KW-1185">Reference proteome</keyword>
<gene>
    <name type="primary">MYH9</name>
</gene>
<organism>
    <name type="scientific">Gallus gallus</name>
    <name type="common">Chicken</name>
    <dbReference type="NCBI Taxonomy" id="9031"/>
    <lineage>
        <taxon>Eukaryota</taxon>
        <taxon>Metazoa</taxon>
        <taxon>Chordata</taxon>
        <taxon>Craniata</taxon>
        <taxon>Vertebrata</taxon>
        <taxon>Euteleostomi</taxon>
        <taxon>Archelosauria</taxon>
        <taxon>Archosauria</taxon>
        <taxon>Dinosauria</taxon>
        <taxon>Saurischia</taxon>
        <taxon>Theropoda</taxon>
        <taxon>Coelurosauria</taxon>
        <taxon>Aves</taxon>
        <taxon>Neognathae</taxon>
        <taxon>Galloanserae</taxon>
        <taxon>Galliformes</taxon>
        <taxon>Phasianidae</taxon>
        <taxon>Phasianinae</taxon>
        <taxon>Gallus</taxon>
    </lineage>
</organism>
<dbReference type="EMBL" id="M26510">
    <property type="protein sequence ID" value="AAA48974.1"/>
    <property type="molecule type" value="mRNA"/>
</dbReference>
<dbReference type="PIR" id="A33977">
    <property type="entry name" value="A33977"/>
</dbReference>
<dbReference type="RefSeq" id="NP_990808.1">
    <property type="nucleotide sequence ID" value="NM_205477.1"/>
</dbReference>
<dbReference type="SMR" id="P14105"/>
<dbReference type="FunCoup" id="P14105">
    <property type="interactions" value="1722"/>
</dbReference>
<dbReference type="STRING" id="9031.ENSGALP00000053892"/>
<dbReference type="iPTMnet" id="P14105"/>
<dbReference type="PaxDb" id="9031-ENSGALP00000020445"/>
<dbReference type="GeneID" id="396469"/>
<dbReference type="KEGG" id="gga:396469"/>
<dbReference type="CTD" id="4627"/>
<dbReference type="VEuPathDB" id="HostDB:geneid_396469"/>
<dbReference type="eggNOG" id="KOG0161">
    <property type="taxonomic scope" value="Eukaryota"/>
</dbReference>
<dbReference type="InParanoid" id="P14105"/>
<dbReference type="OrthoDB" id="10254995at2759"/>
<dbReference type="PhylomeDB" id="P14105"/>
<dbReference type="PRO" id="PR:P14105"/>
<dbReference type="Proteomes" id="UP000000539">
    <property type="component" value="Unassembled WGS sequence"/>
</dbReference>
<dbReference type="GO" id="GO:0015629">
    <property type="term" value="C:actin cytoskeleton"/>
    <property type="evidence" value="ECO:0000250"/>
    <property type="project" value="UniProtKB"/>
</dbReference>
<dbReference type="GO" id="GO:0005826">
    <property type="term" value="C:actomyosin contractile ring"/>
    <property type="evidence" value="ECO:0000250"/>
    <property type="project" value="UniProtKB"/>
</dbReference>
<dbReference type="GO" id="GO:0005938">
    <property type="term" value="C:cell cortex"/>
    <property type="evidence" value="ECO:0000250"/>
    <property type="project" value="UniProtKB"/>
</dbReference>
<dbReference type="GO" id="GO:0031252">
    <property type="term" value="C:cell leading edge"/>
    <property type="evidence" value="ECO:0000250"/>
    <property type="project" value="UniProtKB"/>
</dbReference>
<dbReference type="GO" id="GO:0032154">
    <property type="term" value="C:cleavage furrow"/>
    <property type="evidence" value="ECO:0000250"/>
    <property type="project" value="UniProtKB"/>
</dbReference>
<dbReference type="GO" id="GO:0060473">
    <property type="term" value="C:cortical granule"/>
    <property type="evidence" value="ECO:0000250"/>
    <property type="project" value="UniProtKB"/>
</dbReference>
<dbReference type="GO" id="GO:0005737">
    <property type="term" value="C:cytoplasm"/>
    <property type="evidence" value="ECO:0000250"/>
    <property type="project" value="UniProtKB"/>
</dbReference>
<dbReference type="GO" id="GO:0005829">
    <property type="term" value="C:cytosol"/>
    <property type="evidence" value="ECO:0000250"/>
    <property type="project" value="UniProtKB"/>
</dbReference>
<dbReference type="GO" id="GO:0032982">
    <property type="term" value="C:myosin filament"/>
    <property type="evidence" value="ECO:0000318"/>
    <property type="project" value="GO_Central"/>
</dbReference>
<dbReference type="GO" id="GO:0016460">
    <property type="term" value="C:myosin II complex"/>
    <property type="evidence" value="ECO:0000318"/>
    <property type="project" value="GO_Central"/>
</dbReference>
<dbReference type="GO" id="GO:0005634">
    <property type="term" value="C:nucleus"/>
    <property type="evidence" value="ECO:0000250"/>
    <property type="project" value="UniProtKB"/>
</dbReference>
<dbReference type="GO" id="GO:0005886">
    <property type="term" value="C:plasma membrane"/>
    <property type="evidence" value="ECO:0000250"/>
    <property type="project" value="UniProtKB"/>
</dbReference>
<dbReference type="GO" id="GO:0032991">
    <property type="term" value="C:protein-containing complex"/>
    <property type="evidence" value="ECO:0000250"/>
    <property type="project" value="UniProtKB"/>
</dbReference>
<dbReference type="GO" id="GO:0001726">
    <property type="term" value="C:ruffle"/>
    <property type="evidence" value="ECO:0000250"/>
    <property type="project" value="UniProtKB"/>
</dbReference>
<dbReference type="GO" id="GO:0001725">
    <property type="term" value="C:stress fiber"/>
    <property type="evidence" value="ECO:0000250"/>
    <property type="project" value="UniProtKB"/>
</dbReference>
<dbReference type="GO" id="GO:0051015">
    <property type="term" value="F:actin filament binding"/>
    <property type="evidence" value="ECO:0000250"/>
    <property type="project" value="UniProtKB"/>
</dbReference>
<dbReference type="GO" id="GO:0005524">
    <property type="term" value="F:ATP binding"/>
    <property type="evidence" value="ECO:0007669"/>
    <property type="project" value="UniProtKB-KW"/>
</dbReference>
<dbReference type="GO" id="GO:0005516">
    <property type="term" value="F:calmodulin binding"/>
    <property type="evidence" value="ECO:0007669"/>
    <property type="project" value="UniProtKB-KW"/>
</dbReference>
<dbReference type="GO" id="GO:0005178">
    <property type="term" value="F:integrin binding"/>
    <property type="evidence" value="ECO:0000250"/>
    <property type="project" value="UniProtKB"/>
</dbReference>
<dbReference type="GO" id="GO:0000146">
    <property type="term" value="F:microfilament motor activity"/>
    <property type="evidence" value="ECO:0000250"/>
    <property type="project" value="UniProtKB"/>
</dbReference>
<dbReference type="GO" id="GO:0042803">
    <property type="term" value="F:protein homodimerization activity"/>
    <property type="evidence" value="ECO:0000250"/>
    <property type="project" value="UniProtKB"/>
</dbReference>
<dbReference type="GO" id="GO:0043495">
    <property type="term" value="F:protein-membrane adaptor activity"/>
    <property type="evidence" value="ECO:0000250"/>
    <property type="project" value="UniProtKB"/>
</dbReference>
<dbReference type="GO" id="GO:0030036">
    <property type="term" value="P:actin cytoskeleton organization"/>
    <property type="evidence" value="ECO:0000250"/>
    <property type="project" value="UniProtKB"/>
</dbReference>
<dbReference type="GO" id="GO:0030048">
    <property type="term" value="P:actin filament-based movement"/>
    <property type="evidence" value="ECO:0000250"/>
    <property type="project" value="UniProtKB"/>
</dbReference>
<dbReference type="GO" id="GO:0001525">
    <property type="term" value="P:angiogenesis"/>
    <property type="evidence" value="ECO:0000250"/>
    <property type="project" value="UniProtKB"/>
</dbReference>
<dbReference type="GO" id="GO:0043534">
    <property type="term" value="P:blood vessel endothelial cell migration"/>
    <property type="evidence" value="ECO:0000250"/>
    <property type="project" value="UniProtKB"/>
</dbReference>
<dbReference type="GO" id="GO:0060471">
    <property type="term" value="P:cortical granule exocytosis"/>
    <property type="evidence" value="ECO:0000250"/>
    <property type="project" value="UniProtKB"/>
</dbReference>
<dbReference type="GO" id="GO:0032506">
    <property type="term" value="P:cytokinetic process"/>
    <property type="evidence" value="ECO:0000250"/>
    <property type="project" value="UniProtKB"/>
</dbReference>
<dbReference type="GO" id="GO:0006509">
    <property type="term" value="P:membrane protein ectodomain proteolysis"/>
    <property type="evidence" value="ECO:0000250"/>
    <property type="project" value="UniProtKB"/>
</dbReference>
<dbReference type="GO" id="GO:0030224">
    <property type="term" value="P:monocyte differentiation"/>
    <property type="evidence" value="ECO:0000250"/>
    <property type="project" value="UniProtKB"/>
</dbReference>
<dbReference type="GO" id="GO:0031034">
    <property type="term" value="P:myosin filament assembly"/>
    <property type="evidence" value="ECO:0000314"/>
    <property type="project" value="AgBase"/>
</dbReference>
<dbReference type="GO" id="GO:0030220">
    <property type="term" value="P:platelet formation"/>
    <property type="evidence" value="ECO:0000250"/>
    <property type="project" value="UniProtKB"/>
</dbReference>
<dbReference type="GO" id="GO:0015031">
    <property type="term" value="P:protein transport"/>
    <property type="evidence" value="ECO:0000250"/>
    <property type="project" value="UniProtKB"/>
</dbReference>
<dbReference type="GO" id="GO:0008360">
    <property type="term" value="P:regulation of cell shape"/>
    <property type="evidence" value="ECO:0000250"/>
    <property type="project" value="UniProtKB"/>
</dbReference>
<dbReference type="FunFam" id="2.30.30.360:FF:000001">
    <property type="entry name" value="Myosin heavy chain"/>
    <property type="match status" value="1"/>
</dbReference>
<dbReference type="FunFam" id="3.30.70.1590:FF:000001">
    <property type="entry name" value="Myosin heavy chain"/>
    <property type="match status" value="1"/>
</dbReference>
<dbReference type="FunFam" id="1.10.10.820:FF:000002">
    <property type="entry name" value="Myosin heavy chain 10"/>
    <property type="match status" value="1"/>
</dbReference>
<dbReference type="FunFam" id="1.20.120.720:FF:000002">
    <property type="entry name" value="Myosin heavy chain 10"/>
    <property type="match status" value="1"/>
</dbReference>
<dbReference type="FunFam" id="1.20.5.4820:FF:000002">
    <property type="entry name" value="Myosin heavy chain 10"/>
    <property type="match status" value="1"/>
</dbReference>
<dbReference type="FunFam" id="1.20.58.530:FF:000003">
    <property type="entry name" value="Myosin heavy chain 10"/>
    <property type="match status" value="1"/>
</dbReference>
<dbReference type="FunFam" id="1.20.5.340:FF:000008">
    <property type="entry name" value="Myosin heavy chain 11"/>
    <property type="match status" value="1"/>
</dbReference>
<dbReference type="FunFam" id="3.40.850.10:FF:000175">
    <property type="entry name" value="Myosin heavy chain 9"/>
    <property type="match status" value="1"/>
</dbReference>
<dbReference type="FunFam" id="1.20.5.340:FF:000007">
    <property type="entry name" value="Myosin heavy chain, non-muscle"/>
    <property type="match status" value="1"/>
</dbReference>
<dbReference type="FunFam" id="4.10.270.10:FF:000001">
    <property type="entry name" value="Myosin heavy chain, non-muscle"/>
    <property type="match status" value="1"/>
</dbReference>
<dbReference type="FunFam" id="1.20.5.340:FF:000009">
    <property type="entry name" value="myosin-11 isoform X2"/>
    <property type="match status" value="1"/>
</dbReference>
<dbReference type="Gene3D" id="1.10.10.820">
    <property type="match status" value="1"/>
</dbReference>
<dbReference type="Gene3D" id="1.20.5.340">
    <property type="match status" value="3"/>
</dbReference>
<dbReference type="Gene3D" id="1.20.58.530">
    <property type="match status" value="1"/>
</dbReference>
<dbReference type="Gene3D" id="3.30.70.1590">
    <property type="match status" value="1"/>
</dbReference>
<dbReference type="Gene3D" id="6.10.250.2420">
    <property type="match status" value="1"/>
</dbReference>
<dbReference type="Gene3D" id="3.40.850.10">
    <property type="entry name" value="Kinesin motor domain"/>
    <property type="match status" value="1"/>
</dbReference>
<dbReference type="Gene3D" id="2.30.30.360">
    <property type="entry name" value="Myosin S1 fragment, N-terminal"/>
    <property type="match status" value="1"/>
</dbReference>
<dbReference type="Gene3D" id="1.20.120.720">
    <property type="entry name" value="Myosin VI head, motor domain, U50 subdomain"/>
    <property type="match status" value="1"/>
</dbReference>
<dbReference type="Gene3D" id="4.10.270.10">
    <property type="entry name" value="Myosin, subunit A"/>
    <property type="match status" value="1"/>
</dbReference>
<dbReference type="InterPro" id="IPR000048">
    <property type="entry name" value="IQ_motif_EF-hand-BS"/>
</dbReference>
<dbReference type="InterPro" id="IPR036961">
    <property type="entry name" value="Kinesin_motor_dom_sf"/>
</dbReference>
<dbReference type="InterPro" id="IPR001609">
    <property type="entry name" value="Myosin_head_motor_dom-like"/>
</dbReference>
<dbReference type="InterPro" id="IPR004009">
    <property type="entry name" value="Myosin_N"/>
</dbReference>
<dbReference type="InterPro" id="IPR008989">
    <property type="entry name" value="Myosin_S1_N"/>
</dbReference>
<dbReference type="InterPro" id="IPR002928">
    <property type="entry name" value="Myosin_tail"/>
</dbReference>
<dbReference type="InterPro" id="IPR027417">
    <property type="entry name" value="P-loop_NTPase"/>
</dbReference>
<dbReference type="PANTHER" id="PTHR45615">
    <property type="entry name" value="MYOSIN HEAVY CHAIN, NON-MUSCLE"/>
    <property type="match status" value="1"/>
</dbReference>
<dbReference type="PANTHER" id="PTHR45615:SF16">
    <property type="entry name" value="MYOSIN-9"/>
    <property type="match status" value="1"/>
</dbReference>
<dbReference type="Pfam" id="PF00063">
    <property type="entry name" value="Myosin_head"/>
    <property type="match status" value="1"/>
</dbReference>
<dbReference type="Pfam" id="PF02736">
    <property type="entry name" value="Myosin_N"/>
    <property type="match status" value="1"/>
</dbReference>
<dbReference type="Pfam" id="PF01576">
    <property type="entry name" value="Myosin_tail_1"/>
    <property type="match status" value="1"/>
</dbReference>
<dbReference type="PRINTS" id="PR00193">
    <property type="entry name" value="MYOSINHEAVY"/>
</dbReference>
<dbReference type="SMART" id="SM00015">
    <property type="entry name" value="IQ"/>
    <property type="match status" value="1"/>
</dbReference>
<dbReference type="SMART" id="SM00242">
    <property type="entry name" value="MYSc"/>
    <property type="match status" value="1"/>
</dbReference>
<dbReference type="SUPFAM" id="SSF90257">
    <property type="entry name" value="Myosin rod fragments"/>
    <property type="match status" value="5"/>
</dbReference>
<dbReference type="SUPFAM" id="SSF52540">
    <property type="entry name" value="P-loop containing nucleoside triphosphate hydrolases"/>
    <property type="match status" value="1"/>
</dbReference>
<dbReference type="PROSITE" id="PS50096">
    <property type="entry name" value="IQ"/>
    <property type="match status" value="1"/>
</dbReference>
<dbReference type="PROSITE" id="PS51456">
    <property type="entry name" value="MYOSIN_MOTOR"/>
    <property type="match status" value="1"/>
</dbReference>
<dbReference type="PROSITE" id="PS51844">
    <property type="entry name" value="SH3_LIKE"/>
    <property type="match status" value="1"/>
</dbReference>
<feature type="chain" id="PRO_0000123419" description="Myosin-9">
    <location>
        <begin position="1"/>
        <end position="1959"/>
    </location>
</feature>
<feature type="domain" description="Myosin N-terminal SH3-like" evidence="6">
    <location>
        <begin position="27"/>
        <end position="77"/>
    </location>
</feature>
<feature type="domain" description="Myosin motor" evidence="5">
    <location>
        <begin position="81"/>
        <end position="776"/>
    </location>
</feature>
<feature type="domain" description="IQ" evidence="4">
    <location>
        <begin position="779"/>
        <end position="808"/>
    </location>
</feature>
<feature type="region of interest" description="Actin-binding">
    <location>
        <begin position="654"/>
        <end position="676"/>
    </location>
</feature>
<feature type="region of interest" description="Disordered" evidence="7">
    <location>
        <begin position="1118"/>
        <end position="1168"/>
    </location>
</feature>
<feature type="region of interest" description="Disordered" evidence="7">
    <location>
        <begin position="1694"/>
        <end position="1717"/>
    </location>
</feature>
<feature type="region of interest" description="Disordered" evidence="7">
    <location>
        <begin position="1879"/>
        <end position="1917"/>
    </location>
</feature>
<feature type="region of interest" description="Disordered" evidence="7">
    <location>
        <begin position="1936"/>
        <end position="1959"/>
    </location>
</feature>
<feature type="coiled-coil region" evidence="3">
    <location>
        <begin position="837"/>
        <end position="1925"/>
    </location>
</feature>
<feature type="compositionally biased region" description="Basic and acidic residues" evidence="7">
    <location>
        <begin position="1122"/>
        <end position="1148"/>
    </location>
</feature>
<feature type="compositionally biased region" description="Basic and acidic residues" evidence="7">
    <location>
        <begin position="1694"/>
        <end position="1704"/>
    </location>
</feature>
<feature type="compositionally biased region" description="Basic and acidic residues" evidence="7">
    <location>
        <begin position="1947"/>
        <end position="1959"/>
    </location>
</feature>
<feature type="binding site" evidence="3">
    <location>
        <begin position="174"/>
        <end position="181"/>
    </location>
    <ligand>
        <name>ATP</name>
        <dbReference type="ChEBI" id="CHEBI:30616"/>
    </ligand>
</feature>
<sequence>MAQRDADKYLYVDKNIINNPLTQADWAAKKLVWVPSEKSGFEAASLKEEVGDEAIVELAENGKKVKVNKDDIQKMNPPKFSKVEDMAELTCLNEASVLHNLKERYYSGLIYTYSGLFCVVINPYKNLPIYSEEIVEMYKGKKRHEMPPHIYAITDTAYRSMMQDREDQSILCTGESGAGKTENTKKVIQYLAHVASSHKSKKDQGELERQLLQANPILEAFGNAKTVKNDNSSRFGKFIRINFDVNGYIVGANIETYLLEKSRAIRQAKEERTFHIFYYLLSGAGEHLKTDLLLEPYNKYRFLSNGHVTIPGQQDKDMFQETMEAMRIMGIPDEEQIGLLKVISGVLQLGNIVFKKERNTDQASMPDNTAAQKVSHLLGINVTDFTRGILTPRIKVGRDYVQKAQTKEQADFAIEALAKATYEQMFRWLVMRINKALDKTKRQGASFIGILDIAGFEIFELNSFEQLCINYTNEKLQQLFNHTMFILEQEEYQNEGIEWNFIDFGLDLQPCIDLIEKPAGPPGILALLDEECWFPKATDKSFVEKVVQEQGTHPKFQKPKQLKDKADFCIIHYAGKVDYKADEWLMKNMDPLNDNIATLLHQSSDKFVSELWKDVDRIVGLDQVAGMSETALPGAFKTRKGMFRTVGQLYKEQLAKLMATLRNTNPNFVRCIIPNHEKKAGKLDPHLVLDQLRCNGVLEGIRICRQGFPNRVVFQEFRQRYEILTPNAIPKGFMDGKQACVLMIKALELDSNLYRIGQSKVFFRAGVLAHLEEERDLKITDVIIGFQACCRGYLARKAFAKRQQQLTAMKVLQRNCAAYLKLRNWQWWRLFTKVKPLLQVSRQEEEMMAKEEELIKVKEKQLAAENRLSEMETFQAQLMAEKMQLQEQLQAEAELCAEAEEIRARLTAKKQELEEICHDLEARVEEEEERCQHLQAEKKKMQQNIQELEEQLEEEESARQKLQLEKVTTEAKLKKLEEDVIVLEDQNLKLAKEKKLLEDRMSEFTTNLTEEEEKSKSLAKLKNKHEAMITDLEERLRREEKQRQELEKTRRKLEGDSSDLHDQIAELQAQIAELKIQLSKKEEELQAALARVEEEAAQKNMALKKIRELESQITELQEDLESERASRNKAEKQKRDLGEELEALKTELEDTLDSTAAQQELRSKREQEVTVLKKTLEDEAKTHEAQIQEMRQKHSQAIEELAEQLEQTKRVKANLEKAKQALESERAELSNEVKVLLQGKGDAEHKRKKVDAQLQELQVKFTEGERVKTELAERVNKLQVELDNVTGLLNQSDSKSIKLAKDFSALESQLQDTQELLQEETRLKLSFSTKLKQTEDEKNALKEQLEEEEEAKRNLEKQISVLQQQAVEARKKMDDGLGCLEIAEEAKKKLQKDLESLTQRYEEKIAAYDKLEKTKTRLQQELDDIAVDLDHQRQTVSNLEKKQKKFDQLLAEEKNISAKYAEERDRAEAEAREKETKALSLARALEEAIEQKAELERVNKQFRTEMEDLMSSKDDVGKSVHELEKAKRALEQQVEEMKTQLEELEDELQATEDAKLRLEVNQQAMKAQFDRDLLGRDEQNEEKRKQLIRQVREMEVELEDERKQRSIAVAARKKLELDLKDLESHIDTANKNRDEAIKHVRKLQAQMKDYMRELEDTRTSREEILAQAKENEKKLKSMEAEMIQLQEELAAAERAKRQAQQERDELADEIANSSGKGALAMEEKRRLEARIAQLEEELEEEQGNTEIINDRLKKANLQIDQMNADLNAERSNAQKNENARQQMERQNKELKLKLQEMESAVKSKYKATITALEAKIVQLEEQLDMETKERQAASKQVRRAEKKLKDILLQVDDERRNAEQFKDQADKANMRLKQLKRQLEEAEEEAQRANVRRKLQRELDDATETADAMNREVSSLKSKLRRGDLPFVVTRRLVRKGTGECSDEEVDGKAEAGDAKATE</sequence>
<accession>P14105</accession>
<accession>Q9TNS8</accession>
<evidence type="ECO:0000250" key="1">
    <source>
        <dbReference type="UniProtKB" id="P35579"/>
    </source>
</evidence>
<evidence type="ECO:0000250" key="2">
    <source>
        <dbReference type="UniProtKB" id="Q8VDD5"/>
    </source>
</evidence>
<evidence type="ECO:0000255" key="3"/>
<evidence type="ECO:0000255" key="4">
    <source>
        <dbReference type="PROSITE-ProRule" id="PRU00116"/>
    </source>
</evidence>
<evidence type="ECO:0000255" key="5">
    <source>
        <dbReference type="PROSITE-ProRule" id="PRU00782"/>
    </source>
</evidence>
<evidence type="ECO:0000255" key="6">
    <source>
        <dbReference type="PROSITE-ProRule" id="PRU01190"/>
    </source>
</evidence>
<evidence type="ECO:0000256" key="7">
    <source>
        <dbReference type="SAM" id="MobiDB-lite"/>
    </source>
</evidence>
<evidence type="ECO:0000269" key="8">
    <source>
    </source>
</evidence>
<evidence type="ECO:0000305" key="9"/>
<reference key="1">
    <citation type="journal article" date="1989" name="Proc. Natl. Acad. Sci. U.S.A.">
        <title>Cloning of the cDNA encoding the myosin heavy chain of a vertebrate cellular myosin.</title>
        <authorList>
            <person name="Shohet R.V."/>
            <person name="Conti M.A."/>
            <person name="Kawamoto S."/>
            <person name="Preston Y.A."/>
            <person name="Brill D.A."/>
            <person name="Adelstein R.S."/>
        </authorList>
    </citation>
    <scope>NUCLEOTIDE SEQUENCE [MRNA]</scope>
    <source>
        <tissue>Intestinal epithelium</tissue>
    </source>
</reference>
<reference key="2">
    <citation type="journal article" date="1989" name="Eur. J. Biochem.">
        <title>Two distinct nonmuscle myosin-heavy-chain mRNAs are differentially expressed in various chicken tissues. Identification of a novel gene family of vertebrate non-sarcomeric myosin heavy chains.</title>
        <authorList>
            <person name="Katsuragawa Y."/>
            <person name="Yanagisawa M."/>
            <person name="Inoue A."/>
            <person name="Masaki T."/>
        </authorList>
    </citation>
    <scope>NUCLEOTIDE SEQUENCE [MRNA] OF 716-1008</scope>
    <scope>TISSUE SPECIFICITY</scope>
</reference>
<reference key="3">
    <citation type="journal article" date="1992" name="J. Cell Biol.">
        <title>Role of the COOH-terminal nonhelical tailpiece in the assembly of a vertebrate nonmuscle myosin rod.</title>
        <authorList>
            <person name="Hodge T.P."/>
            <person name="Cross R."/>
            <person name="Kendrick-Jones J."/>
        </authorList>
    </citation>
    <scope>NUCLEOTIDE SEQUENCE [MRNA] OF 1900-1959</scope>
</reference>
<comment type="function">
    <text evidence="1">Cellular myosin that appears to play a role in cytokinesis, cell shape, and specialized functions such as secretion and capping.</text>
</comment>
<comment type="subunit">
    <text>Myosin is a hexameric protein that consists of 2 heavy chain subunits (MHC), 2 alkali light chain subunits (MLC) and 2 regulatory light chain subunits (MLC-2).</text>
</comment>
<comment type="subcellular location">
    <subcellularLocation>
        <location evidence="2">Cytoplasm</location>
        <location evidence="2">Cytoskeleton</location>
    </subcellularLocation>
    <subcellularLocation>
        <location evidence="2">Cytoplasm</location>
        <location evidence="2">Cell cortex</location>
    </subcellularLocation>
    <subcellularLocation>
        <location evidence="2">Cytoplasmic vesicle</location>
        <location evidence="2">Secretory vesicle</location>
        <location evidence="2">Cortical granule</location>
    </subcellularLocation>
    <text evidence="1">Colocalizes with actin filaments at lamellipodia margins and at the leading edge of migrating cells.</text>
</comment>
<comment type="tissue specificity">
    <text evidence="8">Expressed in fibroblasts, brain, lung, kidney, spleen, and skeletal, cardiac and smooth muscles.</text>
</comment>
<comment type="domain">
    <text>The rodlike tail sequence is highly repetitive, showing cycles of a 28-residue repeat pattern composed of 4 heptapeptides, characteristic for alpha-helical coiled coils.</text>
</comment>
<comment type="similarity">
    <text evidence="9">Belongs to the TRAFAC class myosin-kinesin ATPase superfamily. Myosin family.</text>
</comment>